<protein>
    <recommendedName>
        <fullName evidence="1">LexA repressor</fullName>
        <ecNumber evidence="1">3.4.21.88</ecNumber>
    </recommendedName>
</protein>
<proteinExistence type="inferred from homology"/>
<dbReference type="EC" id="3.4.21.88" evidence="1"/>
<dbReference type="EMBL" id="AF251128">
    <property type="protein sequence ID" value="AAQ14269.1"/>
    <property type="molecule type" value="Genomic_DNA"/>
</dbReference>
<dbReference type="EMBL" id="AL591688">
    <property type="protein sequence ID" value="CAC46189.1"/>
    <property type="molecule type" value="Genomic_DNA"/>
</dbReference>
<dbReference type="RefSeq" id="NP_385716.1">
    <property type="nucleotide sequence ID" value="NC_003047.1"/>
</dbReference>
<dbReference type="RefSeq" id="WP_003528303.1">
    <property type="nucleotide sequence ID" value="NC_003047.1"/>
</dbReference>
<dbReference type="SMR" id="Q92PW3"/>
<dbReference type="MEROPS" id="S24.001"/>
<dbReference type="EnsemblBacteria" id="CAC46189">
    <property type="protein sequence ID" value="CAC46189"/>
    <property type="gene ID" value="SMc01183"/>
</dbReference>
<dbReference type="KEGG" id="sme:SMc01183"/>
<dbReference type="PATRIC" id="fig|266834.11.peg.3041"/>
<dbReference type="eggNOG" id="COG1974">
    <property type="taxonomic scope" value="Bacteria"/>
</dbReference>
<dbReference type="HOGENOM" id="CLU_066192_45_2_5"/>
<dbReference type="OrthoDB" id="9802364at2"/>
<dbReference type="Proteomes" id="UP000001976">
    <property type="component" value="Chromosome"/>
</dbReference>
<dbReference type="CollecTF" id="EXPREG_00001480"/>
<dbReference type="GO" id="GO:0003677">
    <property type="term" value="F:DNA binding"/>
    <property type="evidence" value="ECO:0007669"/>
    <property type="project" value="UniProtKB-UniRule"/>
</dbReference>
<dbReference type="GO" id="GO:0004252">
    <property type="term" value="F:serine-type endopeptidase activity"/>
    <property type="evidence" value="ECO:0007669"/>
    <property type="project" value="UniProtKB-UniRule"/>
</dbReference>
<dbReference type="GO" id="GO:0006281">
    <property type="term" value="P:DNA repair"/>
    <property type="evidence" value="ECO:0007669"/>
    <property type="project" value="UniProtKB-UniRule"/>
</dbReference>
<dbReference type="GO" id="GO:0006260">
    <property type="term" value="P:DNA replication"/>
    <property type="evidence" value="ECO:0007669"/>
    <property type="project" value="UniProtKB-UniRule"/>
</dbReference>
<dbReference type="GO" id="GO:0045892">
    <property type="term" value="P:negative regulation of DNA-templated transcription"/>
    <property type="evidence" value="ECO:0000269"/>
    <property type="project" value="CollecTF"/>
</dbReference>
<dbReference type="GO" id="GO:0006508">
    <property type="term" value="P:proteolysis"/>
    <property type="evidence" value="ECO:0007669"/>
    <property type="project" value="InterPro"/>
</dbReference>
<dbReference type="GO" id="GO:0009432">
    <property type="term" value="P:SOS response"/>
    <property type="evidence" value="ECO:0000269"/>
    <property type="project" value="CollecTF"/>
</dbReference>
<dbReference type="CDD" id="cd06529">
    <property type="entry name" value="S24_LexA-like"/>
    <property type="match status" value="1"/>
</dbReference>
<dbReference type="FunFam" id="1.10.10.10:FF:000102">
    <property type="entry name" value="LexA repressor"/>
    <property type="match status" value="1"/>
</dbReference>
<dbReference type="FunFam" id="2.10.109.10:FF:000001">
    <property type="entry name" value="LexA repressor"/>
    <property type="match status" value="1"/>
</dbReference>
<dbReference type="Gene3D" id="2.10.109.10">
    <property type="entry name" value="Umud Fragment, subunit A"/>
    <property type="match status" value="1"/>
</dbReference>
<dbReference type="Gene3D" id="1.10.10.10">
    <property type="entry name" value="Winged helix-like DNA-binding domain superfamily/Winged helix DNA-binding domain"/>
    <property type="match status" value="1"/>
</dbReference>
<dbReference type="HAMAP" id="MF_00015">
    <property type="entry name" value="LexA"/>
    <property type="match status" value="1"/>
</dbReference>
<dbReference type="InterPro" id="IPR006200">
    <property type="entry name" value="LexA"/>
</dbReference>
<dbReference type="InterPro" id="IPR039418">
    <property type="entry name" value="LexA-like"/>
</dbReference>
<dbReference type="InterPro" id="IPR036286">
    <property type="entry name" value="LexA/Signal_pep-like_sf"/>
</dbReference>
<dbReference type="InterPro" id="IPR006199">
    <property type="entry name" value="LexA_DNA-bd_dom"/>
</dbReference>
<dbReference type="InterPro" id="IPR050077">
    <property type="entry name" value="LexA_repressor"/>
</dbReference>
<dbReference type="InterPro" id="IPR006197">
    <property type="entry name" value="Peptidase_S24_LexA"/>
</dbReference>
<dbReference type="InterPro" id="IPR015927">
    <property type="entry name" value="Peptidase_S24_S26A/B/C"/>
</dbReference>
<dbReference type="InterPro" id="IPR036388">
    <property type="entry name" value="WH-like_DNA-bd_sf"/>
</dbReference>
<dbReference type="InterPro" id="IPR036390">
    <property type="entry name" value="WH_DNA-bd_sf"/>
</dbReference>
<dbReference type="NCBIfam" id="TIGR00498">
    <property type="entry name" value="lexA"/>
    <property type="match status" value="1"/>
</dbReference>
<dbReference type="PANTHER" id="PTHR33516">
    <property type="entry name" value="LEXA REPRESSOR"/>
    <property type="match status" value="1"/>
</dbReference>
<dbReference type="PANTHER" id="PTHR33516:SF2">
    <property type="entry name" value="LEXA REPRESSOR-RELATED"/>
    <property type="match status" value="1"/>
</dbReference>
<dbReference type="Pfam" id="PF01726">
    <property type="entry name" value="LexA_DNA_bind"/>
    <property type="match status" value="1"/>
</dbReference>
<dbReference type="Pfam" id="PF00717">
    <property type="entry name" value="Peptidase_S24"/>
    <property type="match status" value="1"/>
</dbReference>
<dbReference type="PRINTS" id="PR00726">
    <property type="entry name" value="LEXASERPTASE"/>
</dbReference>
<dbReference type="SUPFAM" id="SSF51306">
    <property type="entry name" value="LexA/Signal peptidase"/>
    <property type="match status" value="1"/>
</dbReference>
<dbReference type="SUPFAM" id="SSF46785">
    <property type="entry name" value="Winged helix' DNA-binding domain"/>
    <property type="match status" value="1"/>
</dbReference>
<reference key="1">
    <citation type="submission" date="2000-03" db="EMBL/GenBank/DDBJ databases">
        <title>The lexA gene of Rhizobium meliloti.</title>
        <authorList>
            <person name="Campoy S."/>
            <person name="Tapias A."/>
            <person name="Mazon G."/>
            <person name="Barbe J."/>
        </authorList>
    </citation>
    <scope>NUCLEOTIDE SEQUENCE [GENOMIC DNA]</scope>
</reference>
<reference key="2">
    <citation type="journal article" date="2001" name="Proc. Natl. Acad. Sci. U.S.A.">
        <title>Analysis of the chromosome sequence of the legume symbiont Sinorhizobium meliloti strain 1021.</title>
        <authorList>
            <person name="Capela D."/>
            <person name="Barloy-Hubler F."/>
            <person name="Gouzy J."/>
            <person name="Bothe G."/>
            <person name="Ampe F."/>
            <person name="Batut J."/>
            <person name="Boistard P."/>
            <person name="Becker A."/>
            <person name="Boutry M."/>
            <person name="Cadieu E."/>
            <person name="Dreano S."/>
            <person name="Gloux S."/>
            <person name="Godrie T."/>
            <person name="Goffeau A."/>
            <person name="Kahn D."/>
            <person name="Kiss E."/>
            <person name="Lelaure V."/>
            <person name="Masuy D."/>
            <person name="Pohl T."/>
            <person name="Portetelle D."/>
            <person name="Puehler A."/>
            <person name="Purnelle B."/>
            <person name="Ramsperger U."/>
            <person name="Renard C."/>
            <person name="Thebault P."/>
            <person name="Vandenbol M."/>
            <person name="Weidner S."/>
            <person name="Galibert F."/>
        </authorList>
    </citation>
    <scope>NUCLEOTIDE SEQUENCE [LARGE SCALE GENOMIC DNA]</scope>
    <source>
        <strain>1021</strain>
    </source>
</reference>
<reference key="3">
    <citation type="journal article" date="2001" name="Science">
        <title>The composite genome of the legume symbiont Sinorhizobium meliloti.</title>
        <authorList>
            <person name="Galibert F."/>
            <person name="Finan T.M."/>
            <person name="Long S.R."/>
            <person name="Puehler A."/>
            <person name="Abola P."/>
            <person name="Ampe F."/>
            <person name="Barloy-Hubler F."/>
            <person name="Barnett M.J."/>
            <person name="Becker A."/>
            <person name="Boistard P."/>
            <person name="Bothe G."/>
            <person name="Boutry M."/>
            <person name="Bowser L."/>
            <person name="Buhrmester J."/>
            <person name="Cadieu E."/>
            <person name="Capela D."/>
            <person name="Chain P."/>
            <person name="Cowie A."/>
            <person name="Davis R.W."/>
            <person name="Dreano S."/>
            <person name="Federspiel N.A."/>
            <person name="Fisher R.F."/>
            <person name="Gloux S."/>
            <person name="Godrie T."/>
            <person name="Goffeau A."/>
            <person name="Golding B."/>
            <person name="Gouzy J."/>
            <person name="Gurjal M."/>
            <person name="Hernandez-Lucas I."/>
            <person name="Hong A."/>
            <person name="Huizar L."/>
            <person name="Hyman R.W."/>
            <person name="Jones T."/>
            <person name="Kahn D."/>
            <person name="Kahn M.L."/>
            <person name="Kalman S."/>
            <person name="Keating D.H."/>
            <person name="Kiss E."/>
            <person name="Komp C."/>
            <person name="Lelaure V."/>
            <person name="Masuy D."/>
            <person name="Palm C."/>
            <person name="Peck M.C."/>
            <person name="Pohl T.M."/>
            <person name="Portetelle D."/>
            <person name="Purnelle B."/>
            <person name="Ramsperger U."/>
            <person name="Surzycki R."/>
            <person name="Thebault P."/>
            <person name="Vandenbol M."/>
            <person name="Vorhoelter F.J."/>
            <person name="Weidner S."/>
            <person name="Wells D.H."/>
            <person name="Wong K."/>
            <person name="Yeh K.-C."/>
            <person name="Batut J."/>
        </authorList>
    </citation>
    <scope>NUCLEOTIDE SEQUENCE [LARGE SCALE GENOMIC DNA]</scope>
    <source>
        <strain>1021</strain>
    </source>
</reference>
<organism>
    <name type="scientific">Rhizobium meliloti (strain 1021)</name>
    <name type="common">Ensifer meliloti</name>
    <name type="synonym">Sinorhizobium meliloti</name>
    <dbReference type="NCBI Taxonomy" id="266834"/>
    <lineage>
        <taxon>Bacteria</taxon>
        <taxon>Pseudomonadati</taxon>
        <taxon>Pseudomonadota</taxon>
        <taxon>Alphaproteobacteria</taxon>
        <taxon>Hyphomicrobiales</taxon>
        <taxon>Rhizobiaceae</taxon>
        <taxon>Sinorhizobium/Ensifer group</taxon>
        <taxon>Sinorhizobium</taxon>
    </lineage>
</organism>
<keyword id="KW-0068">Autocatalytic cleavage</keyword>
<keyword id="KW-0227">DNA damage</keyword>
<keyword id="KW-0234">DNA repair</keyword>
<keyword id="KW-0235">DNA replication</keyword>
<keyword id="KW-0238">DNA-binding</keyword>
<keyword id="KW-0378">Hydrolase</keyword>
<keyword id="KW-1185">Reference proteome</keyword>
<keyword id="KW-0678">Repressor</keyword>
<keyword id="KW-0742">SOS response</keyword>
<keyword id="KW-0804">Transcription</keyword>
<keyword id="KW-0805">Transcription regulation</keyword>
<evidence type="ECO:0000255" key="1">
    <source>
        <dbReference type="HAMAP-Rule" id="MF_00015"/>
    </source>
</evidence>
<evidence type="ECO:0000305" key="2"/>
<name>LEXA_RHIME</name>
<feature type="chain" id="PRO_0000170076" description="LexA repressor">
    <location>
        <begin position="1"/>
        <end position="238"/>
    </location>
</feature>
<feature type="DNA-binding region" description="H-T-H motif" evidence="1">
    <location>
        <begin position="26"/>
        <end position="46"/>
    </location>
</feature>
<feature type="active site" description="For autocatalytic cleavage activity" evidence="1">
    <location>
        <position position="158"/>
    </location>
</feature>
<feature type="active site" description="For autocatalytic cleavage activity" evidence="1">
    <location>
        <position position="196"/>
    </location>
</feature>
<feature type="site" description="Cleavage; by autolysis" evidence="1">
    <location>
        <begin position="123"/>
        <end position="124"/>
    </location>
</feature>
<feature type="sequence conflict" description="In Ref. 1; AAQ14269." evidence="2" ref="1">
    <original>K</original>
    <variation>R</variation>
    <location>
        <position position="201"/>
    </location>
</feature>
<feature type="sequence conflict" description="In Ref. 1; AAQ14269." evidence="2" ref="1">
    <original>Q</original>
    <variation>K</variation>
    <location>
        <position position="227"/>
    </location>
</feature>
<sequence>MLTRKQQELLLFIHERMKESGVPPSFDEMKDALDLASKSGIHRLITALEERGFIRRLPNRARALEVIKLPEAYAGASQVRRGFSPSVIEGSLGKPAAPPPAPKPAPPAEAASVAVPVMGRIAAGVPISAIQNNMHDISVPVEMIGSGEHYALEIKGDSMIEAGILDGDTVIIRNGSTASPGDIVVALIDDEEATLKRFRRKGASIALEAANPAYETRIFGPDRVKIQGRLVGLIRRYH</sequence>
<comment type="function">
    <text evidence="1">Represses a number of genes involved in the response to DNA damage (SOS response), including recA and lexA. In the presence of single-stranded DNA, RecA interacts with LexA causing an autocatalytic cleavage which disrupts the DNA-binding part of LexA, leading to derepression of the SOS regulon and eventually DNA repair.</text>
</comment>
<comment type="catalytic activity">
    <reaction evidence="1">
        <text>Hydrolysis of Ala-|-Gly bond in repressor LexA.</text>
        <dbReference type="EC" id="3.4.21.88"/>
    </reaction>
</comment>
<comment type="subunit">
    <text evidence="1">Homodimer.</text>
</comment>
<comment type="similarity">
    <text evidence="1">Belongs to the peptidase S24 family.</text>
</comment>
<gene>
    <name evidence="1" type="primary">lexA</name>
    <name type="ordered locus">R01610</name>
    <name type="ORF">SMc01183</name>
</gene>
<accession>Q92PW3</accession>